<keyword id="KW-0687">Ribonucleoprotein</keyword>
<keyword id="KW-0689">Ribosomal protein</keyword>
<gene>
    <name evidence="1" type="primary">rpmH</name>
    <name type="ordered locus">Pmob_0603</name>
</gene>
<protein>
    <recommendedName>
        <fullName evidence="1">Large ribosomal subunit protein bL34</fullName>
    </recommendedName>
    <alternativeName>
        <fullName evidence="3">50S ribosomal protein L34</fullName>
    </alternativeName>
</protein>
<reference key="1">
    <citation type="submission" date="2007-11" db="EMBL/GenBank/DDBJ databases">
        <title>Complete sequence of Petroga mobilis SJ95.</title>
        <authorList>
            <consortium name="US DOE Joint Genome Institute"/>
            <person name="Copeland A."/>
            <person name="Lucas S."/>
            <person name="Lapidus A."/>
            <person name="Barry K."/>
            <person name="Glavina del Rio T."/>
            <person name="Dalin E."/>
            <person name="Tice H."/>
            <person name="Pitluck S."/>
            <person name="Meincke L."/>
            <person name="Brettin T."/>
            <person name="Bruce D."/>
            <person name="Detter J.C."/>
            <person name="Han C."/>
            <person name="Kuske C.R."/>
            <person name="Schmutz J."/>
            <person name="Larimer F."/>
            <person name="Land M."/>
            <person name="Hauser L."/>
            <person name="Kyrpides N."/>
            <person name="Mikhailova N."/>
            <person name="Noll K."/>
            <person name="Richardson P."/>
        </authorList>
    </citation>
    <scope>NUCLEOTIDE SEQUENCE [LARGE SCALE GENOMIC DNA]</scope>
    <source>
        <strain>DSM 10674 / SJ95</strain>
    </source>
</reference>
<evidence type="ECO:0000255" key="1">
    <source>
        <dbReference type="HAMAP-Rule" id="MF_00391"/>
    </source>
</evidence>
<evidence type="ECO:0000256" key="2">
    <source>
        <dbReference type="SAM" id="MobiDB-lite"/>
    </source>
</evidence>
<evidence type="ECO:0000305" key="3"/>
<comment type="similarity">
    <text evidence="1">Belongs to the bacterial ribosomal protein bL34 family.</text>
</comment>
<proteinExistence type="inferred from homology"/>
<dbReference type="EMBL" id="CP000879">
    <property type="protein sequence ID" value="ABX31337.1"/>
    <property type="molecule type" value="Genomic_DNA"/>
</dbReference>
<dbReference type="RefSeq" id="WP_012208441.1">
    <property type="nucleotide sequence ID" value="NC_010003.1"/>
</dbReference>
<dbReference type="SMR" id="A9BJC3"/>
<dbReference type="STRING" id="403833.Pmob_0603"/>
<dbReference type="KEGG" id="pmo:Pmob_0603"/>
<dbReference type="eggNOG" id="COG0230">
    <property type="taxonomic scope" value="Bacteria"/>
</dbReference>
<dbReference type="HOGENOM" id="CLU_129938_2_0_0"/>
<dbReference type="OrthoDB" id="9804164at2"/>
<dbReference type="Proteomes" id="UP000000789">
    <property type="component" value="Chromosome"/>
</dbReference>
<dbReference type="GO" id="GO:1990904">
    <property type="term" value="C:ribonucleoprotein complex"/>
    <property type="evidence" value="ECO:0007669"/>
    <property type="project" value="UniProtKB-KW"/>
</dbReference>
<dbReference type="GO" id="GO:0005840">
    <property type="term" value="C:ribosome"/>
    <property type="evidence" value="ECO:0007669"/>
    <property type="project" value="UniProtKB-KW"/>
</dbReference>
<dbReference type="GO" id="GO:0003735">
    <property type="term" value="F:structural constituent of ribosome"/>
    <property type="evidence" value="ECO:0007669"/>
    <property type="project" value="InterPro"/>
</dbReference>
<dbReference type="GO" id="GO:0006412">
    <property type="term" value="P:translation"/>
    <property type="evidence" value="ECO:0007669"/>
    <property type="project" value="UniProtKB-UniRule"/>
</dbReference>
<dbReference type="FunFam" id="1.10.287.3980:FF:000001">
    <property type="entry name" value="Mitochondrial ribosomal protein L34"/>
    <property type="match status" value="1"/>
</dbReference>
<dbReference type="Gene3D" id="1.10.287.3980">
    <property type="match status" value="1"/>
</dbReference>
<dbReference type="HAMAP" id="MF_00391">
    <property type="entry name" value="Ribosomal_bL34"/>
    <property type="match status" value="1"/>
</dbReference>
<dbReference type="InterPro" id="IPR000271">
    <property type="entry name" value="Ribosomal_bL34"/>
</dbReference>
<dbReference type="InterPro" id="IPR020939">
    <property type="entry name" value="Ribosomal_bL34_CS"/>
</dbReference>
<dbReference type="NCBIfam" id="TIGR01030">
    <property type="entry name" value="rpmH_bact"/>
    <property type="match status" value="1"/>
</dbReference>
<dbReference type="PANTHER" id="PTHR14503:SF4">
    <property type="entry name" value="LARGE RIBOSOMAL SUBUNIT PROTEIN BL34M"/>
    <property type="match status" value="1"/>
</dbReference>
<dbReference type="PANTHER" id="PTHR14503">
    <property type="entry name" value="MITOCHONDRIAL RIBOSOMAL PROTEIN 34 FAMILY MEMBER"/>
    <property type="match status" value="1"/>
</dbReference>
<dbReference type="Pfam" id="PF00468">
    <property type="entry name" value="Ribosomal_L34"/>
    <property type="match status" value="1"/>
</dbReference>
<dbReference type="PROSITE" id="PS00784">
    <property type="entry name" value="RIBOSOMAL_L34"/>
    <property type="match status" value="1"/>
</dbReference>
<feature type="chain" id="PRO_1000080258" description="Large ribosomal subunit protein bL34">
    <location>
        <begin position="1"/>
        <end position="44"/>
    </location>
</feature>
<feature type="region of interest" description="Disordered" evidence="2">
    <location>
        <begin position="1"/>
        <end position="44"/>
    </location>
</feature>
<feature type="compositionally biased region" description="Basic residues" evidence="2">
    <location>
        <begin position="1"/>
        <end position="38"/>
    </location>
</feature>
<name>RL34_PETMO</name>
<organism>
    <name type="scientific">Petrotoga mobilis (strain DSM 10674 / SJ95)</name>
    <dbReference type="NCBI Taxonomy" id="403833"/>
    <lineage>
        <taxon>Bacteria</taxon>
        <taxon>Thermotogati</taxon>
        <taxon>Thermotogota</taxon>
        <taxon>Thermotogae</taxon>
        <taxon>Petrotogales</taxon>
        <taxon>Petrotogaceae</taxon>
        <taxon>Petrotoga</taxon>
    </lineage>
</organism>
<sequence length="44" mass="5380">MKRTYQPSRIKRKRTHGFLARKRTSTGRNVLRRRRAKGRERLTV</sequence>
<accession>A9BJC3</accession>